<keyword id="KW-0002">3D-structure</keyword>
<keyword id="KW-0067">ATP-binding</keyword>
<keyword id="KW-1003">Cell membrane</keyword>
<keyword id="KW-0418">Kinase</keyword>
<keyword id="KW-0472">Membrane</keyword>
<keyword id="KW-0547">Nucleotide-binding</keyword>
<keyword id="KW-0597">Phosphoprotein</keyword>
<keyword id="KW-1185">Reference proteome</keyword>
<keyword id="KW-0808">Transferase</keyword>
<keyword id="KW-0812">Transmembrane</keyword>
<keyword id="KW-1133">Transmembrane helix</keyword>
<keyword id="KW-0902">Two-component regulatory system</keyword>
<sequence length="446" mass="47829">MNILSRIFARTPSLRTRVVVATAIGAAIPVLIVGTVVWVGITNDRKERLDRRLDEAAGFAIPFVPRGLDEIPRSPNDQDALITVRRGNVIKSNSDITLPKLQDDYADTYVRGVRYRVRTVEIPGPEPTSVAVGATYDATVAETNNLHRRVLLICTFAIGAAAVFAWLLAAFAVRPFKQLAEQTRSIDAGDEAPRVEVHGASEAIEIAEAMRGMLQRIWNEQNRTKEALASARDFAAVSSHELRTPLTAMRTNLEVLSTLDLPDDQRKEVLNDVIRTQSRIEATLSALERLAQGELSTSDDHVPVDITDLLDRAAHDAARIYPDLDVSLVPSPTCIIVGLPAGLRLAVDNAIANAVKHGGATLVQLSAVSSRAGVEIAIDDNGSGVPEGERQVVFERFSRGSTASHSGSGLGLALVAQQAQLHGGTASLENSPLGGARLVLRLPGPS</sequence>
<feature type="chain" id="PRO_0000074854" description="Sensor-type histidine kinase PrrB">
    <location>
        <begin position="1"/>
        <end position="446"/>
    </location>
</feature>
<feature type="transmembrane region" description="Helical" evidence="1">
    <location>
        <begin position="19"/>
        <end position="39"/>
    </location>
</feature>
<feature type="transmembrane region" description="Helical" evidence="1">
    <location>
        <begin position="151"/>
        <end position="171"/>
    </location>
</feature>
<feature type="domain" description="HAMP" evidence="2">
    <location>
        <begin position="172"/>
        <end position="222"/>
    </location>
</feature>
<feature type="domain" description="Histidine kinase" evidence="3">
    <location>
        <begin position="237"/>
        <end position="446"/>
    </location>
</feature>
<feature type="modified residue" description="Phosphohistidine; by autocatalysis" evidence="3">
    <location>
        <position position="240"/>
    </location>
</feature>
<feature type="strand" evidence="10">
    <location>
        <begin position="302"/>
        <end position="305"/>
    </location>
</feature>
<feature type="helix" evidence="10">
    <location>
        <begin position="306"/>
        <end position="320"/>
    </location>
</feature>
<feature type="strand" evidence="10">
    <location>
        <begin position="325"/>
        <end position="328"/>
    </location>
</feature>
<feature type="strand" evidence="10">
    <location>
        <begin position="335"/>
        <end position="338"/>
    </location>
</feature>
<feature type="helix" evidence="10">
    <location>
        <begin position="340"/>
        <end position="356"/>
    </location>
</feature>
<feature type="strand" evidence="10">
    <location>
        <begin position="361"/>
        <end position="370"/>
    </location>
</feature>
<feature type="strand" evidence="10">
    <location>
        <begin position="373"/>
        <end position="383"/>
    </location>
</feature>
<feature type="helix" evidence="10">
    <location>
        <begin position="387"/>
        <end position="389"/>
    </location>
</feature>
<feature type="helix" evidence="10">
    <location>
        <begin position="390"/>
        <end position="394"/>
    </location>
</feature>
<feature type="helix" evidence="10">
    <location>
        <begin position="413"/>
        <end position="421"/>
    </location>
</feature>
<feature type="strand" evidence="10">
    <location>
        <begin position="425"/>
        <end position="430"/>
    </location>
</feature>
<feature type="strand" evidence="10">
    <location>
        <begin position="434"/>
        <end position="443"/>
    </location>
</feature>
<reference key="1">
    <citation type="journal article" date="1998" name="Nature">
        <title>Deciphering the biology of Mycobacterium tuberculosis from the complete genome sequence.</title>
        <authorList>
            <person name="Cole S.T."/>
            <person name="Brosch R."/>
            <person name="Parkhill J."/>
            <person name="Garnier T."/>
            <person name="Churcher C.M."/>
            <person name="Harris D.E."/>
            <person name="Gordon S.V."/>
            <person name="Eiglmeier K."/>
            <person name="Gas S."/>
            <person name="Barry C.E. III"/>
            <person name="Tekaia F."/>
            <person name="Badcock K."/>
            <person name="Basham D."/>
            <person name="Brown D."/>
            <person name="Chillingworth T."/>
            <person name="Connor R."/>
            <person name="Davies R.M."/>
            <person name="Devlin K."/>
            <person name="Feltwell T."/>
            <person name="Gentles S."/>
            <person name="Hamlin N."/>
            <person name="Holroyd S."/>
            <person name="Hornsby T."/>
            <person name="Jagels K."/>
            <person name="Krogh A."/>
            <person name="McLean J."/>
            <person name="Moule S."/>
            <person name="Murphy L.D."/>
            <person name="Oliver S."/>
            <person name="Osborne J."/>
            <person name="Quail M.A."/>
            <person name="Rajandream M.A."/>
            <person name="Rogers J."/>
            <person name="Rutter S."/>
            <person name="Seeger K."/>
            <person name="Skelton S."/>
            <person name="Squares S."/>
            <person name="Squares R."/>
            <person name="Sulston J.E."/>
            <person name="Taylor K."/>
            <person name="Whitehead S."/>
            <person name="Barrell B.G."/>
        </authorList>
    </citation>
    <scope>NUCLEOTIDE SEQUENCE [LARGE SCALE GENOMIC DNA]</scope>
    <source>
        <strain>ATCC 25618 / H37Rv</strain>
    </source>
</reference>
<reference key="2">
    <citation type="journal article" date="2002" name="Infect. Immun.">
        <title>Transient requirement of the PrrA-PrrB two-component system for early intracellular multiplication of Mycobacterium tuberculosis.</title>
        <authorList>
            <person name="Ewann F."/>
            <person name="Jackson M."/>
            <person name="Pethe K."/>
            <person name="Cooper A."/>
            <person name="Mielcarek N."/>
            <person name="Ensergueix D."/>
            <person name="Gicquel B."/>
            <person name="Locht C."/>
            <person name="Supply P."/>
        </authorList>
    </citation>
    <scope>FUNCTION</scope>
    <source>
        <strain>Mt103</strain>
    </source>
</reference>
<reference key="3">
    <citation type="journal article" date="2004" name="Microbiology">
        <title>Intracellular autoregulation of the Mycobacterium tuberculosis PrrA response regulator.</title>
        <authorList>
            <person name="Ewann F."/>
            <person name="Locht C."/>
            <person name="Supply P."/>
        </authorList>
    </citation>
    <scope>FUNCTION</scope>
    <scope>AUTOPHOSPHORYLATION</scope>
    <scope>CATALYTIC ACTIVITY</scope>
    <source>
        <strain>Mt103</strain>
    </source>
</reference>
<reference key="4">
    <citation type="journal article" date="2011" name="Mol. Cell. Proteomics">
        <title>Proteogenomic analysis of Mycobacterium tuberculosis by high resolution mass spectrometry.</title>
        <authorList>
            <person name="Kelkar D.S."/>
            <person name="Kumar D."/>
            <person name="Kumar P."/>
            <person name="Balakrishnan L."/>
            <person name="Muthusamy B."/>
            <person name="Yadav A.K."/>
            <person name="Shrivastava P."/>
            <person name="Marimuthu A."/>
            <person name="Anand S."/>
            <person name="Sundaram H."/>
            <person name="Kingsbury R."/>
            <person name="Harsha H.C."/>
            <person name="Nair B."/>
            <person name="Prasad T.S."/>
            <person name="Chauhan D.S."/>
            <person name="Katoch K."/>
            <person name="Katoch V.M."/>
            <person name="Kumar P."/>
            <person name="Chaerkady R."/>
            <person name="Ramachandran S."/>
            <person name="Dash D."/>
            <person name="Pandey A."/>
        </authorList>
    </citation>
    <scope>IDENTIFICATION BY MASS SPECTROMETRY [LARGE SCALE ANALYSIS]</scope>
    <source>
        <strain>ATCC 25618 / H37Rv</strain>
    </source>
</reference>
<reference key="5">
    <citation type="journal article" date="2012" name="J. Bacteriol.">
        <title>The prrAB two-component system is essential for Mycobacterium tuberculosis viability and is induced under nitrogen-limiting conditions.</title>
        <authorList>
            <person name="Haydel S.E."/>
            <person name="Malhotra V."/>
            <person name="Cornelison G.L."/>
            <person name="Clark-Curtiss J.E."/>
        </authorList>
    </citation>
    <scope>FUNCTION</scope>
    <scope>INDUCTION BY NITROGEN-LIMITING CONDITIONS</scope>
</reference>
<reference key="6">
    <citation type="journal article" date="2017" name="Biochem. J.">
        <title>Dual phosphorylation in response regulator protein PrrA is crucial for intracellular survival of mycobacteria consequent upon transcriptional activation.</title>
        <authorList>
            <person name="Mishra A.K."/>
            <person name="Yabaji S.M."/>
            <person name="Dubey R.K."/>
            <person name="Dhamija E."/>
            <person name="Srivastava K.K."/>
        </authorList>
    </citation>
    <scope>FUNCTION</scope>
    <scope>CATALYTIC ACTIVITY</scope>
    <source>
        <strain>ATCC 25618 / H37Rv</strain>
    </source>
</reference>
<name>PRRB_MYCTU</name>
<accession>P9WGK7</accession>
<accession>L0T543</accession>
<accession>P0A5Z8</accession>
<accession>Q10560</accession>
<dbReference type="EC" id="2.7.13.3" evidence="5 7"/>
<dbReference type="EMBL" id="AL123456">
    <property type="protein sequence ID" value="CCP43650.1"/>
    <property type="molecule type" value="Genomic_DNA"/>
</dbReference>
<dbReference type="PIR" id="C70783">
    <property type="entry name" value="C70783"/>
</dbReference>
<dbReference type="RefSeq" id="NP_215417.1">
    <property type="nucleotide sequence ID" value="NC_000962.3"/>
</dbReference>
<dbReference type="RefSeq" id="WP_003404689.1">
    <property type="nucleotide sequence ID" value="NZ_NVQJ01000001.1"/>
</dbReference>
<dbReference type="PDB" id="1YS3">
    <property type="method" value="X-ray"/>
    <property type="resolution" value="1.90 A"/>
    <property type="chains" value="A/B/C=297-446"/>
</dbReference>
<dbReference type="PDB" id="1YSR">
    <property type="method" value="X-ray"/>
    <property type="resolution" value="1.78 A"/>
    <property type="chains" value="A/B/C=297-446"/>
</dbReference>
<dbReference type="PDBsum" id="1YS3"/>
<dbReference type="PDBsum" id="1YSR"/>
<dbReference type="SMR" id="P9WGK7"/>
<dbReference type="DIP" id="DIP-29034N"/>
<dbReference type="FunCoup" id="P9WGK7">
    <property type="interactions" value="57"/>
</dbReference>
<dbReference type="IntAct" id="P9WGK7">
    <property type="interactions" value="1"/>
</dbReference>
<dbReference type="STRING" id="83332.Rv0902c"/>
<dbReference type="PaxDb" id="83332-Rv0902c"/>
<dbReference type="DNASU" id="885647"/>
<dbReference type="GeneID" id="45424865"/>
<dbReference type="GeneID" id="885647"/>
<dbReference type="KEGG" id="mtu:Rv0902c"/>
<dbReference type="KEGG" id="mtv:RVBD_0902c"/>
<dbReference type="TubercuList" id="Rv0902c"/>
<dbReference type="eggNOG" id="COG2205">
    <property type="taxonomic scope" value="Bacteria"/>
</dbReference>
<dbReference type="InParanoid" id="P9WGK7"/>
<dbReference type="OrthoDB" id="5241347at2"/>
<dbReference type="PhylomeDB" id="P9WGK7"/>
<dbReference type="EvolutionaryTrace" id="P9WGK7"/>
<dbReference type="Proteomes" id="UP000001584">
    <property type="component" value="Chromosome"/>
</dbReference>
<dbReference type="GO" id="GO:0009274">
    <property type="term" value="C:peptidoglycan-based cell wall"/>
    <property type="evidence" value="ECO:0007005"/>
    <property type="project" value="MTBBASE"/>
</dbReference>
<dbReference type="GO" id="GO:0005886">
    <property type="term" value="C:plasma membrane"/>
    <property type="evidence" value="ECO:0007005"/>
    <property type="project" value="MTBBASE"/>
</dbReference>
<dbReference type="GO" id="GO:0005524">
    <property type="term" value="F:ATP binding"/>
    <property type="evidence" value="ECO:0000314"/>
    <property type="project" value="MTBBASE"/>
</dbReference>
<dbReference type="GO" id="GO:0042802">
    <property type="term" value="F:identical protein binding"/>
    <property type="evidence" value="ECO:0000353"/>
    <property type="project" value="IntAct"/>
</dbReference>
<dbReference type="GO" id="GO:0000155">
    <property type="term" value="F:phosphorelay sensor kinase activity"/>
    <property type="evidence" value="ECO:0000314"/>
    <property type="project" value="UniProtKB"/>
</dbReference>
<dbReference type="GO" id="GO:0000160">
    <property type="term" value="P:phosphorelay signal transduction system"/>
    <property type="evidence" value="ECO:0000314"/>
    <property type="project" value="UniProtKB"/>
</dbReference>
<dbReference type="CDD" id="cd06225">
    <property type="entry name" value="HAMP"/>
    <property type="match status" value="1"/>
</dbReference>
<dbReference type="CDD" id="cd00075">
    <property type="entry name" value="HATPase"/>
    <property type="match status" value="1"/>
</dbReference>
<dbReference type="CDD" id="cd00082">
    <property type="entry name" value="HisKA"/>
    <property type="match status" value="1"/>
</dbReference>
<dbReference type="FunFam" id="3.30.565.10:FF:000068">
    <property type="entry name" value="Sensor-type histidine kinase prrB"/>
    <property type="match status" value="1"/>
</dbReference>
<dbReference type="FunFam" id="1.10.287.130:FF:000095">
    <property type="entry name" value="Two-component sensor histidine kinase"/>
    <property type="match status" value="1"/>
</dbReference>
<dbReference type="Gene3D" id="1.10.287.130">
    <property type="match status" value="1"/>
</dbReference>
<dbReference type="Gene3D" id="6.10.340.10">
    <property type="match status" value="1"/>
</dbReference>
<dbReference type="Gene3D" id="3.30.565.10">
    <property type="entry name" value="Histidine kinase-like ATPase, C-terminal domain"/>
    <property type="match status" value="1"/>
</dbReference>
<dbReference type="InterPro" id="IPR003660">
    <property type="entry name" value="HAMP_dom"/>
</dbReference>
<dbReference type="InterPro" id="IPR036890">
    <property type="entry name" value="HATPase_C_sf"/>
</dbReference>
<dbReference type="InterPro" id="IPR005467">
    <property type="entry name" value="His_kinase_dom"/>
</dbReference>
<dbReference type="InterPro" id="IPR003661">
    <property type="entry name" value="HisK_dim/P_dom"/>
</dbReference>
<dbReference type="InterPro" id="IPR036097">
    <property type="entry name" value="HisK_dim/P_sf"/>
</dbReference>
<dbReference type="InterPro" id="IPR004358">
    <property type="entry name" value="Sig_transdc_His_kin-like_C"/>
</dbReference>
<dbReference type="InterPro" id="IPR050428">
    <property type="entry name" value="TCS_sensor_his_kinase"/>
</dbReference>
<dbReference type="PANTHER" id="PTHR45436:SF5">
    <property type="entry name" value="SENSOR HISTIDINE KINASE TRCS"/>
    <property type="match status" value="1"/>
</dbReference>
<dbReference type="PANTHER" id="PTHR45436">
    <property type="entry name" value="SENSOR HISTIDINE KINASE YKOH"/>
    <property type="match status" value="1"/>
</dbReference>
<dbReference type="Pfam" id="PF00672">
    <property type="entry name" value="HAMP"/>
    <property type="match status" value="1"/>
</dbReference>
<dbReference type="Pfam" id="PF02518">
    <property type="entry name" value="HATPase_c"/>
    <property type="match status" value="1"/>
</dbReference>
<dbReference type="Pfam" id="PF00512">
    <property type="entry name" value="HisKA"/>
    <property type="match status" value="1"/>
</dbReference>
<dbReference type="PRINTS" id="PR00344">
    <property type="entry name" value="BCTRLSENSOR"/>
</dbReference>
<dbReference type="SMART" id="SM00304">
    <property type="entry name" value="HAMP"/>
    <property type="match status" value="1"/>
</dbReference>
<dbReference type="SMART" id="SM00387">
    <property type="entry name" value="HATPase_c"/>
    <property type="match status" value="1"/>
</dbReference>
<dbReference type="SMART" id="SM00388">
    <property type="entry name" value="HisKA"/>
    <property type="match status" value="1"/>
</dbReference>
<dbReference type="SUPFAM" id="SSF55874">
    <property type="entry name" value="ATPase domain of HSP90 chaperone/DNA topoisomerase II/histidine kinase"/>
    <property type="match status" value="1"/>
</dbReference>
<dbReference type="SUPFAM" id="SSF47384">
    <property type="entry name" value="Homodimeric domain of signal transducing histidine kinase"/>
    <property type="match status" value="1"/>
</dbReference>
<dbReference type="PROSITE" id="PS50885">
    <property type="entry name" value="HAMP"/>
    <property type="match status" value="1"/>
</dbReference>
<dbReference type="PROSITE" id="PS50109">
    <property type="entry name" value="HIS_KIN"/>
    <property type="match status" value="1"/>
</dbReference>
<comment type="function">
    <text evidence="4 5 6 7">Member of the two-component regulatory system PrrB/PrrA that is involved specifically in early intracellular multiplication of Mycobacterium and is essential for its viability (PubMed:11953357, PubMed:22081401). Functions as a sensor protein kinase which is autophosphorylated at a histidine residue and transfers its phosphate group to the conserved aspartic acid residue in the regulatory domain of PrrA (PubMed:14702417, PubMed:29101285). In turn, PrrA binds to the upstream promoter regions of target genes including itself to positively regulate their expression (PubMed:14702417).</text>
</comment>
<comment type="catalytic activity">
    <reaction evidence="5 7">
        <text>ATP + protein L-histidine = ADP + protein N-phospho-L-histidine.</text>
        <dbReference type="EC" id="2.7.13.3"/>
    </reaction>
</comment>
<comment type="interaction">
    <interactant intactId="EBI-15568059">
        <id>P9WGK7</id>
    </interactant>
    <interactant intactId="EBI-15568059">
        <id>P9WGK7</id>
        <label>prrB</label>
    </interactant>
    <organismsDiffer>false</organismsDiffer>
    <experiments>7</experiments>
</comment>
<comment type="subcellular location">
    <subcellularLocation>
        <location evidence="9">Cell membrane</location>
        <topology evidence="9">Multi-pass membrane protein</topology>
    </subcellularLocation>
</comment>
<comment type="induction">
    <text evidence="6">By nitrogen-limiting conditions.</text>
</comment>
<comment type="PTM">
    <text evidence="5">Autophosphorylated.</text>
</comment>
<proteinExistence type="evidence at protein level"/>
<evidence type="ECO:0000255" key="1"/>
<evidence type="ECO:0000255" key="2">
    <source>
        <dbReference type="PROSITE-ProRule" id="PRU00102"/>
    </source>
</evidence>
<evidence type="ECO:0000255" key="3">
    <source>
        <dbReference type="PROSITE-ProRule" id="PRU00107"/>
    </source>
</evidence>
<evidence type="ECO:0000269" key="4">
    <source>
    </source>
</evidence>
<evidence type="ECO:0000269" key="5">
    <source>
    </source>
</evidence>
<evidence type="ECO:0000269" key="6">
    <source>
    </source>
</evidence>
<evidence type="ECO:0000269" key="7">
    <source>
    </source>
</evidence>
<evidence type="ECO:0000303" key="8">
    <source>
    </source>
</evidence>
<evidence type="ECO:0000305" key="9"/>
<evidence type="ECO:0007829" key="10">
    <source>
        <dbReference type="PDB" id="1YSR"/>
    </source>
</evidence>
<protein>
    <recommendedName>
        <fullName evidence="8">Sensor-type histidine kinase PrrB</fullName>
        <ecNumber evidence="5 7">2.7.13.3</ecNumber>
    </recommendedName>
</protein>
<gene>
    <name evidence="8" type="primary">prrB</name>
    <name type="ordered locus">Rv0902c</name>
    <name type="ORF">MTCY31.30c</name>
</gene>
<organism>
    <name type="scientific">Mycobacterium tuberculosis (strain ATCC 25618 / H37Rv)</name>
    <dbReference type="NCBI Taxonomy" id="83332"/>
    <lineage>
        <taxon>Bacteria</taxon>
        <taxon>Bacillati</taxon>
        <taxon>Actinomycetota</taxon>
        <taxon>Actinomycetes</taxon>
        <taxon>Mycobacteriales</taxon>
        <taxon>Mycobacteriaceae</taxon>
        <taxon>Mycobacterium</taxon>
        <taxon>Mycobacterium tuberculosis complex</taxon>
    </lineage>
</organism>